<comment type="subcellular location">
    <subcellularLocation>
        <location evidence="2">Secreted</location>
    </subcellularLocation>
    <text evidence="2">Secreted via the ESAT-6 secretion system (Ess) / type VII secretion system (T7SS).</text>
</comment>
<comment type="similarity">
    <text evidence="3">Belongs to the EsxC family.</text>
</comment>
<evidence type="ECO:0000250" key="1">
    <source>
        <dbReference type="UniProtKB" id="A0A0H2XIK2"/>
    </source>
</evidence>
<evidence type="ECO:0000250" key="2">
    <source>
        <dbReference type="UniProtKB" id="P0C051"/>
    </source>
</evidence>
<evidence type="ECO:0000305" key="3"/>
<accession>Q6GCI4</accession>
<keyword id="KW-0964">Secreted</keyword>
<keyword id="KW-0843">Virulence</keyword>
<gene>
    <name evidence="1" type="primary">esxC</name>
    <name evidence="2" type="synonym">esaC</name>
    <name type="ordered locus">SAS0264</name>
</gene>
<protein>
    <recommendedName>
        <fullName evidence="2">ESAT-6 secretion system extracellular protein C</fullName>
        <shortName evidence="2">Ess extracellular protein C</shortName>
    </recommendedName>
</protein>
<organism>
    <name type="scientific">Staphylococcus aureus (strain MSSA476)</name>
    <dbReference type="NCBI Taxonomy" id="282459"/>
    <lineage>
        <taxon>Bacteria</taxon>
        <taxon>Bacillati</taxon>
        <taxon>Bacillota</taxon>
        <taxon>Bacilli</taxon>
        <taxon>Bacillales</taxon>
        <taxon>Staphylococcaceae</taxon>
        <taxon>Staphylococcus</taxon>
    </lineage>
</organism>
<proteinExistence type="inferred from homology"/>
<sequence length="130" mass="14951">MNFNDIETMVKSKFKDIKKHAEEIAHEIEVRSGYLRKAEQYKRLEFNLSFALDDIESTAKDVQTAKTSANKDSVTVKGKAPNTLYIEKRNLMKQKLEMLGEDIDKNKESLQKAKEIAGEKASEYFNKAMN</sequence>
<dbReference type="EMBL" id="BX571857">
    <property type="protein sequence ID" value="CAG42035.1"/>
    <property type="molecule type" value="Genomic_DNA"/>
</dbReference>
<dbReference type="RefSeq" id="WP_001010291.1">
    <property type="nucleotide sequence ID" value="NC_002953.3"/>
</dbReference>
<dbReference type="SMR" id="Q6GCI4"/>
<dbReference type="KEGG" id="sas:SAS0264"/>
<dbReference type="HOGENOM" id="CLU_1936813_0_0_9"/>
<dbReference type="GO" id="GO:0005576">
    <property type="term" value="C:extracellular region"/>
    <property type="evidence" value="ECO:0007669"/>
    <property type="project" value="UniProtKB-SubCell"/>
</dbReference>
<reference key="1">
    <citation type="journal article" date="2004" name="Proc. Natl. Acad. Sci. U.S.A.">
        <title>Complete genomes of two clinical Staphylococcus aureus strains: evidence for the rapid evolution of virulence and drug resistance.</title>
        <authorList>
            <person name="Holden M.T.G."/>
            <person name="Feil E.J."/>
            <person name="Lindsay J.A."/>
            <person name="Peacock S.J."/>
            <person name="Day N.P.J."/>
            <person name="Enright M.C."/>
            <person name="Foster T.J."/>
            <person name="Moore C.E."/>
            <person name="Hurst L."/>
            <person name="Atkin R."/>
            <person name="Barron A."/>
            <person name="Bason N."/>
            <person name="Bentley S.D."/>
            <person name="Chillingworth C."/>
            <person name="Chillingworth T."/>
            <person name="Churcher C."/>
            <person name="Clark L."/>
            <person name="Corton C."/>
            <person name="Cronin A."/>
            <person name="Doggett J."/>
            <person name="Dowd L."/>
            <person name="Feltwell T."/>
            <person name="Hance Z."/>
            <person name="Harris B."/>
            <person name="Hauser H."/>
            <person name="Holroyd S."/>
            <person name="Jagels K."/>
            <person name="James K.D."/>
            <person name="Lennard N."/>
            <person name="Line A."/>
            <person name="Mayes R."/>
            <person name="Moule S."/>
            <person name="Mungall K."/>
            <person name="Ormond D."/>
            <person name="Quail M.A."/>
            <person name="Rabbinowitsch E."/>
            <person name="Rutherford K.M."/>
            <person name="Sanders M."/>
            <person name="Sharp S."/>
            <person name="Simmonds M."/>
            <person name="Stevens K."/>
            <person name="Whitehead S."/>
            <person name="Barrell B.G."/>
            <person name="Spratt B.G."/>
            <person name="Parkhill J."/>
        </authorList>
    </citation>
    <scope>NUCLEOTIDE SEQUENCE [LARGE SCALE GENOMIC DNA]</scope>
    <source>
        <strain>MSSA476</strain>
    </source>
</reference>
<feature type="chain" id="PRO_0000087053" description="ESAT-6 secretion system extracellular protein C">
    <location>
        <begin position="1"/>
        <end position="130"/>
    </location>
</feature>
<name>ESXC_STAAS</name>